<proteinExistence type="inferred from homology"/>
<accession>B4F223</accession>
<name>PIMT_PROMH</name>
<organism>
    <name type="scientific">Proteus mirabilis (strain HI4320)</name>
    <dbReference type="NCBI Taxonomy" id="529507"/>
    <lineage>
        <taxon>Bacteria</taxon>
        <taxon>Pseudomonadati</taxon>
        <taxon>Pseudomonadota</taxon>
        <taxon>Gammaproteobacteria</taxon>
        <taxon>Enterobacterales</taxon>
        <taxon>Morganellaceae</taxon>
        <taxon>Proteus</taxon>
    </lineage>
</organism>
<sequence length="208" mass="23326">MLSRSMKDLLTMLKQHGINDERLLEAMSKVPRELFIDEALSHKAYENTALPIGNGQTISQPYIVAKMTSLLELQATDSVLEIGTGSGYQTAVLANLVHHVSSVERIKILQWQAKRRFKHLDLHNISTRHGDGWEGWVSKGPFNAIIVTACATEVPQRLLMQLADGGRMIIPVGEQQQMLKFIRRLGNDFHYQSIEAVRFVPLIAGELA</sequence>
<evidence type="ECO:0000255" key="1">
    <source>
        <dbReference type="HAMAP-Rule" id="MF_00090"/>
    </source>
</evidence>
<comment type="function">
    <text evidence="1">Catalyzes the methyl esterification of L-isoaspartyl residues in peptides and proteins that result from spontaneous decomposition of normal L-aspartyl and L-asparaginyl residues. It plays a role in the repair and/or degradation of damaged proteins.</text>
</comment>
<comment type="catalytic activity">
    <reaction evidence="1">
        <text>[protein]-L-isoaspartate + S-adenosyl-L-methionine = [protein]-L-isoaspartate alpha-methyl ester + S-adenosyl-L-homocysteine</text>
        <dbReference type="Rhea" id="RHEA:12705"/>
        <dbReference type="Rhea" id="RHEA-COMP:12143"/>
        <dbReference type="Rhea" id="RHEA-COMP:12144"/>
        <dbReference type="ChEBI" id="CHEBI:57856"/>
        <dbReference type="ChEBI" id="CHEBI:59789"/>
        <dbReference type="ChEBI" id="CHEBI:90596"/>
        <dbReference type="ChEBI" id="CHEBI:90598"/>
        <dbReference type="EC" id="2.1.1.77"/>
    </reaction>
</comment>
<comment type="subcellular location">
    <subcellularLocation>
        <location evidence="1">Cytoplasm</location>
    </subcellularLocation>
</comment>
<comment type="similarity">
    <text evidence="1">Belongs to the methyltransferase superfamily. L-isoaspartyl/D-aspartyl protein methyltransferase family.</text>
</comment>
<keyword id="KW-0963">Cytoplasm</keyword>
<keyword id="KW-0489">Methyltransferase</keyword>
<keyword id="KW-1185">Reference proteome</keyword>
<keyword id="KW-0949">S-adenosyl-L-methionine</keyword>
<keyword id="KW-0808">Transferase</keyword>
<dbReference type="EC" id="2.1.1.77" evidence="1"/>
<dbReference type="EMBL" id="AM942759">
    <property type="protein sequence ID" value="CAR44444.1"/>
    <property type="molecule type" value="Genomic_DNA"/>
</dbReference>
<dbReference type="RefSeq" id="WP_004244345.1">
    <property type="nucleotide sequence ID" value="NC_010554.1"/>
</dbReference>
<dbReference type="SMR" id="B4F223"/>
<dbReference type="EnsemblBacteria" id="CAR44444">
    <property type="protein sequence ID" value="CAR44444"/>
    <property type="gene ID" value="PMI2238"/>
</dbReference>
<dbReference type="GeneID" id="6801822"/>
<dbReference type="KEGG" id="pmr:PMI2238"/>
<dbReference type="eggNOG" id="COG2518">
    <property type="taxonomic scope" value="Bacteria"/>
</dbReference>
<dbReference type="HOGENOM" id="CLU_055432_2_0_6"/>
<dbReference type="Proteomes" id="UP000008319">
    <property type="component" value="Chromosome"/>
</dbReference>
<dbReference type="GO" id="GO:0005737">
    <property type="term" value="C:cytoplasm"/>
    <property type="evidence" value="ECO:0007669"/>
    <property type="project" value="UniProtKB-SubCell"/>
</dbReference>
<dbReference type="GO" id="GO:0004719">
    <property type="term" value="F:protein-L-isoaspartate (D-aspartate) O-methyltransferase activity"/>
    <property type="evidence" value="ECO:0007669"/>
    <property type="project" value="UniProtKB-UniRule"/>
</dbReference>
<dbReference type="GO" id="GO:0032259">
    <property type="term" value="P:methylation"/>
    <property type="evidence" value="ECO:0007669"/>
    <property type="project" value="UniProtKB-KW"/>
</dbReference>
<dbReference type="GO" id="GO:0036211">
    <property type="term" value="P:protein modification process"/>
    <property type="evidence" value="ECO:0007669"/>
    <property type="project" value="UniProtKB-UniRule"/>
</dbReference>
<dbReference type="GO" id="GO:0030091">
    <property type="term" value="P:protein repair"/>
    <property type="evidence" value="ECO:0007669"/>
    <property type="project" value="UniProtKB-UniRule"/>
</dbReference>
<dbReference type="CDD" id="cd02440">
    <property type="entry name" value="AdoMet_MTases"/>
    <property type="match status" value="1"/>
</dbReference>
<dbReference type="FunFam" id="3.40.50.150:FF:000010">
    <property type="entry name" value="Protein-L-isoaspartate O-methyltransferase"/>
    <property type="match status" value="1"/>
</dbReference>
<dbReference type="Gene3D" id="3.40.50.150">
    <property type="entry name" value="Vaccinia Virus protein VP39"/>
    <property type="match status" value="1"/>
</dbReference>
<dbReference type="HAMAP" id="MF_00090">
    <property type="entry name" value="PIMT"/>
    <property type="match status" value="1"/>
</dbReference>
<dbReference type="InterPro" id="IPR000682">
    <property type="entry name" value="PCMT"/>
</dbReference>
<dbReference type="InterPro" id="IPR029063">
    <property type="entry name" value="SAM-dependent_MTases_sf"/>
</dbReference>
<dbReference type="NCBIfam" id="TIGR00080">
    <property type="entry name" value="pimt"/>
    <property type="match status" value="1"/>
</dbReference>
<dbReference type="NCBIfam" id="NF001453">
    <property type="entry name" value="PRK00312.1"/>
    <property type="match status" value="1"/>
</dbReference>
<dbReference type="PANTHER" id="PTHR11579">
    <property type="entry name" value="PROTEIN-L-ISOASPARTATE O-METHYLTRANSFERASE"/>
    <property type="match status" value="1"/>
</dbReference>
<dbReference type="PANTHER" id="PTHR11579:SF0">
    <property type="entry name" value="PROTEIN-L-ISOASPARTATE(D-ASPARTATE) O-METHYLTRANSFERASE"/>
    <property type="match status" value="1"/>
</dbReference>
<dbReference type="Pfam" id="PF01135">
    <property type="entry name" value="PCMT"/>
    <property type="match status" value="1"/>
</dbReference>
<dbReference type="SUPFAM" id="SSF53335">
    <property type="entry name" value="S-adenosyl-L-methionine-dependent methyltransferases"/>
    <property type="match status" value="1"/>
</dbReference>
<dbReference type="PROSITE" id="PS01279">
    <property type="entry name" value="PCMT"/>
    <property type="match status" value="1"/>
</dbReference>
<gene>
    <name evidence="1" type="primary">pcm</name>
    <name type="ordered locus">PMI2238</name>
</gene>
<feature type="chain" id="PRO_1000093264" description="Protein-L-isoaspartate O-methyltransferase">
    <location>
        <begin position="1"/>
        <end position="208"/>
    </location>
</feature>
<feature type="active site" evidence="1">
    <location>
        <position position="59"/>
    </location>
</feature>
<reference key="1">
    <citation type="journal article" date="2008" name="J. Bacteriol.">
        <title>Complete genome sequence of uropathogenic Proteus mirabilis, a master of both adherence and motility.</title>
        <authorList>
            <person name="Pearson M.M."/>
            <person name="Sebaihia M."/>
            <person name="Churcher C."/>
            <person name="Quail M.A."/>
            <person name="Seshasayee A.S."/>
            <person name="Luscombe N.M."/>
            <person name="Abdellah Z."/>
            <person name="Arrosmith C."/>
            <person name="Atkin B."/>
            <person name="Chillingworth T."/>
            <person name="Hauser H."/>
            <person name="Jagels K."/>
            <person name="Moule S."/>
            <person name="Mungall K."/>
            <person name="Norbertczak H."/>
            <person name="Rabbinowitsch E."/>
            <person name="Walker D."/>
            <person name="Whithead S."/>
            <person name="Thomson N.R."/>
            <person name="Rather P.N."/>
            <person name="Parkhill J."/>
            <person name="Mobley H.L.T."/>
        </authorList>
    </citation>
    <scope>NUCLEOTIDE SEQUENCE [LARGE SCALE GENOMIC DNA]</scope>
    <source>
        <strain>HI4320</strain>
    </source>
</reference>
<protein>
    <recommendedName>
        <fullName evidence="1">Protein-L-isoaspartate O-methyltransferase</fullName>
        <ecNumber evidence="1">2.1.1.77</ecNumber>
    </recommendedName>
    <alternativeName>
        <fullName evidence="1">L-isoaspartyl protein carboxyl methyltransferase</fullName>
    </alternativeName>
    <alternativeName>
        <fullName evidence="1">Protein L-isoaspartyl methyltransferase</fullName>
    </alternativeName>
    <alternativeName>
        <fullName evidence="1">Protein-beta-aspartate methyltransferase</fullName>
        <shortName evidence="1">PIMT</shortName>
    </alternativeName>
</protein>